<name>RL25_SALHS</name>
<protein>
    <recommendedName>
        <fullName evidence="1">Large ribosomal subunit protein bL25</fullName>
    </recommendedName>
    <alternativeName>
        <fullName evidence="2">50S ribosomal protein L25</fullName>
    </alternativeName>
</protein>
<dbReference type="EMBL" id="CP001120">
    <property type="protein sequence ID" value="ACF70471.1"/>
    <property type="molecule type" value="Genomic_DNA"/>
</dbReference>
<dbReference type="RefSeq" id="WP_000494192.1">
    <property type="nucleotide sequence ID" value="NC_011083.1"/>
</dbReference>
<dbReference type="SMR" id="B4TAP8"/>
<dbReference type="KEGG" id="seh:SeHA_C2461"/>
<dbReference type="HOGENOM" id="CLU_137946_0_0_6"/>
<dbReference type="Proteomes" id="UP000001866">
    <property type="component" value="Chromosome"/>
</dbReference>
<dbReference type="GO" id="GO:0022625">
    <property type="term" value="C:cytosolic large ribosomal subunit"/>
    <property type="evidence" value="ECO:0007669"/>
    <property type="project" value="TreeGrafter"/>
</dbReference>
<dbReference type="GO" id="GO:0008097">
    <property type="term" value="F:5S rRNA binding"/>
    <property type="evidence" value="ECO:0007669"/>
    <property type="project" value="InterPro"/>
</dbReference>
<dbReference type="GO" id="GO:0003735">
    <property type="term" value="F:structural constituent of ribosome"/>
    <property type="evidence" value="ECO:0007669"/>
    <property type="project" value="InterPro"/>
</dbReference>
<dbReference type="GO" id="GO:0006412">
    <property type="term" value="P:translation"/>
    <property type="evidence" value="ECO:0007669"/>
    <property type="project" value="UniProtKB-UniRule"/>
</dbReference>
<dbReference type="CDD" id="cd00495">
    <property type="entry name" value="Ribosomal_L25_TL5_CTC"/>
    <property type="match status" value="1"/>
</dbReference>
<dbReference type="FunFam" id="2.40.240.10:FF:000002">
    <property type="entry name" value="50S ribosomal protein L25"/>
    <property type="match status" value="1"/>
</dbReference>
<dbReference type="Gene3D" id="2.40.240.10">
    <property type="entry name" value="Ribosomal Protein L25, Chain P"/>
    <property type="match status" value="1"/>
</dbReference>
<dbReference type="HAMAP" id="MF_01336">
    <property type="entry name" value="Ribosomal_bL25"/>
    <property type="match status" value="1"/>
</dbReference>
<dbReference type="InterPro" id="IPR020056">
    <property type="entry name" value="Rbsml_bL25/Gln-tRNA_synth_N"/>
</dbReference>
<dbReference type="InterPro" id="IPR011035">
    <property type="entry name" value="Ribosomal_bL25/Gln-tRNA_synth"/>
</dbReference>
<dbReference type="InterPro" id="IPR020055">
    <property type="entry name" value="Ribosomal_bL25_short"/>
</dbReference>
<dbReference type="InterPro" id="IPR029751">
    <property type="entry name" value="Ribosomal_L25_dom"/>
</dbReference>
<dbReference type="InterPro" id="IPR020930">
    <property type="entry name" value="Ribosomal_uL5_bac-type"/>
</dbReference>
<dbReference type="NCBIfam" id="NF004612">
    <property type="entry name" value="PRK05943.1"/>
    <property type="match status" value="1"/>
</dbReference>
<dbReference type="PANTHER" id="PTHR33284">
    <property type="entry name" value="RIBOSOMAL PROTEIN L25/GLN-TRNA SYNTHETASE, ANTI-CODON-BINDING DOMAIN-CONTAINING PROTEIN"/>
    <property type="match status" value="1"/>
</dbReference>
<dbReference type="PANTHER" id="PTHR33284:SF1">
    <property type="entry name" value="RIBOSOMAL PROTEIN L25_GLN-TRNA SYNTHETASE, ANTI-CODON-BINDING DOMAIN-CONTAINING PROTEIN"/>
    <property type="match status" value="1"/>
</dbReference>
<dbReference type="Pfam" id="PF01386">
    <property type="entry name" value="Ribosomal_L25p"/>
    <property type="match status" value="1"/>
</dbReference>
<dbReference type="SUPFAM" id="SSF50715">
    <property type="entry name" value="Ribosomal protein L25-like"/>
    <property type="match status" value="1"/>
</dbReference>
<organism>
    <name type="scientific">Salmonella heidelberg (strain SL476)</name>
    <dbReference type="NCBI Taxonomy" id="454169"/>
    <lineage>
        <taxon>Bacteria</taxon>
        <taxon>Pseudomonadati</taxon>
        <taxon>Pseudomonadota</taxon>
        <taxon>Gammaproteobacteria</taxon>
        <taxon>Enterobacterales</taxon>
        <taxon>Enterobacteriaceae</taxon>
        <taxon>Salmonella</taxon>
    </lineage>
</organism>
<reference key="1">
    <citation type="journal article" date="2011" name="J. Bacteriol.">
        <title>Comparative genomics of 28 Salmonella enterica isolates: evidence for CRISPR-mediated adaptive sublineage evolution.</title>
        <authorList>
            <person name="Fricke W.F."/>
            <person name="Mammel M.K."/>
            <person name="McDermott P.F."/>
            <person name="Tartera C."/>
            <person name="White D.G."/>
            <person name="Leclerc J.E."/>
            <person name="Ravel J."/>
            <person name="Cebula T.A."/>
        </authorList>
    </citation>
    <scope>NUCLEOTIDE SEQUENCE [LARGE SCALE GENOMIC DNA]</scope>
    <source>
        <strain>SL476</strain>
    </source>
</reference>
<keyword id="KW-0687">Ribonucleoprotein</keyword>
<keyword id="KW-0689">Ribosomal protein</keyword>
<keyword id="KW-0694">RNA-binding</keyword>
<keyword id="KW-0699">rRNA-binding</keyword>
<proteinExistence type="inferred from homology"/>
<feature type="chain" id="PRO_1000142593" description="Large ribosomal subunit protein bL25">
    <location>
        <begin position="1"/>
        <end position="94"/>
    </location>
</feature>
<sequence length="94" mass="10541">MFTINAEVRKEQGKGASRRLRAANKFPAIIYGGSEAPIAIELDHDQVMNMQAKAEFYSEVLTLVVDGKEVKVKAQAVQRHAYKPKLTHIDFVRA</sequence>
<comment type="function">
    <text evidence="1">This is one of the proteins that binds to the 5S RNA in the ribosome where it forms part of the central protuberance.</text>
</comment>
<comment type="subunit">
    <text evidence="1">Part of the 50S ribosomal subunit; part of the 5S rRNA/L5/L18/L25 subcomplex. Contacts the 5S rRNA. Binds to the 5S rRNA independently of L5 and L18.</text>
</comment>
<comment type="similarity">
    <text evidence="1">Belongs to the bacterial ribosomal protein bL25 family.</text>
</comment>
<evidence type="ECO:0000255" key="1">
    <source>
        <dbReference type="HAMAP-Rule" id="MF_01336"/>
    </source>
</evidence>
<evidence type="ECO:0000305" key="2"/>
<gene>
    <name evidence="1" type="primary">rplY</name>
    <name type="ordered locus">SeHA_C2461</name>
</gene>
<accession>B4TAP8</accession>